<evidence type="ECO:0000255" key="1">
    <source>
        <dbReference type="HAMAP-Rule" id="MF_00215"/>
    </source>
</evidence>
<sequence>MTVKPELNEITPYLQFNRQEWGNFRKDTPLTLTESDLDKLQGQIEIVSLKEVTEIYLPLSRLLSFYVTARQTLQQATYQFLGKPEPKVPYIIGIAGSVAVGKSTTSRVLKALLSRWPDHPNVEVITTDGFLYSNAKLEKQGLMKRKGFPESYDMPSLLRVLNAIKSGQRNVRIPVYSHHYYDIVRGQYEIVDQPDIVILEGLNILQTGVRKTLQQLQVFVSDFFDFSLFVDAQAQVIQKWYIDRVLSFWRTTFKDPHSYFHYLTQMSETEVAAFAKHVWNEINKVNLMENILPYKNRAQLILEKAADHSIQKVYLRKI</sequence>
<name>COAA_COXB1</name>
<protein>
    <recommendedName>
        <fullName evidence="1">Pantothenate kinase</fullName>
        <ecNumber evidence="1">2.7.1.33</ecNumber>
    </recommendedName>
    <alternativeName>
        <fullName evidence="1">Pantothenic acid kinase</fullName>
    </alternativeName>
</protein>
<gene>
    <name evidence="1" type="primary">coaA</name>
    <name type="ordered locus">CbuK_0390</name>
</gene>
<keyword id="KW-0067">ATP-binding</keyword>
<keyword id="KW-0173">Coenzyme A biosynthesis</keyword>
<keyword id="KW-0963">Cytoplasm</keyword>
<keyword id="KW-0418">Kinase</keyword>
<keyword id="KW-0547">Nucleotide-binding</keyword>
<keyword id="KW-0808">Transferase</keyword>
<comment type="catalytic activity">
    <reaction evidence="1">
        <text>(R)-pantothenate + ATP = (R)-4'-phosphopantothenate + ADP + H(+)</text>
        <dbReference type="Rhea" id="RHEA:16373"/>
        <dbReference type="ChEBI" id="CHEBI:10986"/>
        <dbReference type="ChEBI" id="CHEBI:15378"/>
        <dbReference type="ChEBI" id="CHEBI:29032"/>
        <dbReference type="ChEBI" id="CHEBI:30616"/>
        <dbReference type="ChEBI" id="CHEBI:456216"/>
        <dbReference type="EC" id="2.7.1.33"/>
    </reaction>
</comment>
<comment type="pathway">
    <text evidence="1">Cofactor biosynthesis; coenzyme A biosynthesis; CoA from (R)-pantothenate: step 1/5.</text>
</comment>
<comment type="subcellular location">
    <subcellularLocation>
        <location evidence="1">Cytoplasm</location>
    </subcellularLocation>
</comment>
<comment type="similarity">
    <text evidence="1">Belongs to the prokaryotic pantothenate kinase family.</text>
</comment>
<feature type="chain" id="PRO_1000099929" description="Pantothenate kinase">
    <location>
        <begin position="1"/>
        <end position="318"/>
    </location>
</feature>
<feature type="binding site" evidence="1">
    <location>
        <begin position="96"/>
        <end position="103"/>
    </location>
    <ligand>
        <name>ATP</name>
        <dbReference type="ChEBI" id="CHEBI:30616"/>
    </ligand>
</feature>
<proteinExistence type="inferred from homology"/>
<reference key="1">
    <citation type="journal article" date="2009" name="Infect. Immun.">
        <title>Comparative genomics reveal extensive transposon-mediated genomic plasticity and diversity among potential effector proteins within the genus Coxiella.</title>
        <authorList>
            <person name="Beare P.A."/>
            <person name="Unsworth N."/>
            <person name="Andoh M."/>
            <person name="Voth D.E."/>
            <person name="Omsland A."/>
            <person name="Gilk S.D."/>
            <person name="Williams K.P."/>
            <person name="Sobral B.W."/>
            <person name="Kupko J.J. III"/>
            <person name="Porcella S.F."/>
            <person name="Samuel J.E."/>
            <person name="Heinzen R.A."/>
        </authorList>
    </citation>
    <scope>NUCLEOTIDE SEQUENCE [LARGE SCALE GENOMIC DNA]</scope>
    <source>
        <strain>CbuK_Q154</strain>
    </source>
</reference>
<organism>
    <name type="scientific">Coxiella burnetii (strain CbuK_Q154)</name>
    <name type="common">Coxiella burnetii (strain Q154)</name>
    <dbReference type="NCBI Taxonomy" id="434924"/>
    <lineage>
        <taxon>Bacteria</taxon>
        <taxon>Pseudomonadati</taxon>
        <taxon>Pseudomonadota</taxon>
        <taxon>Gammaproteobacteria</taxon>
        <taxon>Legionellales</taxon>
        <taxon>Coxiellaceae</taxon>
        <taxon>Coxiella</taxon>
    </lineage>
</organism>
<dbReference type="EC" id="2.7.1.33" evidence="1"/>
<dbReference type="EMBL" id="CP001020">
    <property type="protein sequence ID" value="ACJ19680.1"/>
    <property type="molecule type" value="Genomic_DNA"/>
</dbReference>
<dbReference type="RefSeq" id="WP_005771577.1">
    <property type="nucleotide sequence ID" value="NC_011528.1"/>
</dbReference>
<dbReference type="SMR" id="B6J596"/>
<dbReference type="KEGG" id="cbc:CbuK_0390"/>
<dbReference type="HOGENOM" id="CLU_053818_1_1_6"/>
<dbReference type="UniPathway" id="UPA00241">
    <property type="reaction ID" value="UER00352"/>
</dbReference>
<dbReference type="GO" id="GO:0005737">
    <property type="term" value="C:cytoplasm"/>
    <property type="evidence" value="ECO:0007669"/>
    <property type="project" value="UniProtKB-SubCell"/>
</dbReference>
<dbReference type="GO" id="GO:0005524">
    <property type="term" value="F:ATP binding"/>
    <property type="evidence" value="ECO:0007669"/>
    <property type="project" value="UniProtKB-UniRule"/>
</dbReference>
<dbReference type="GO" id="GO:0004594">
    <property type="term" value="F:pantothenate kinase activity"/>
    <property type="evidence" value="ECO:0007669"/>
    <property type="project" value="UniProtKB-UniRule"/>
</dbReference>
<dbReference type="GO" id="GO:0015937">
    <property type="term" value="P:coenzyme A biosynthetic process"/>
    <property type="evidence" value="ECO:0007669"/>
    <property type="project" value="UniProtKB-UniRule"/>
</dbReference>
<dbReference type="CDD" id="cd02025">
    <property type="entry name" value="PanK"/>
    <property type="match status" value="1"/>
</dbReference>
<dbReference type="FunFam" id="3.40.50.300:FF:000242">
    <property type="entry name" value="Pantothenate kinase"/>
    <property type="match status" value="1"/>
</dbReference>
<dbReference type="Gene3D" id="3.40.50.300">
    <property type="entry name" value="P-loop containing nucleotide triphosphate hydrolases"/>
    <property type="match status" value="1"/>
</dbReference>
<dbReference type="HAMAP" id="MF_00215">
    <property type="entry name" value="Pantothen_kinase_1"/>
    <property type="match status" value="1"/>
</dbReference>
<dbReference type="InterPro" id="IPR027417">
    <property type="entry name" value="P-loop_NTPase"/>
</dbReference>
<dbReference type="InterPro" id="IPR004566">
    <property type="entry name" value="PanK"/>
</dbReference>
<dbReference type="InterPro" id="IPR006083">
    <property type="entry name" value="PRK/URK"/>
</dbReference>
<dbReference type="NCBIfam" id="TIGR00554">
    <property type="entry name" value="panK_bact"/>
    <property type="match status" value="1"/>
</dbReference>
<dbReference type="PANTHER" id="PTHR10285">
    <property type="entry name" value="URIDINE KINASE"/>
    <property type="match status" value="1"/>
</dbReference>
<dbReference type="Pfam" id="PF00485">
    <property type="entry name" value="PRK"/>
    <property type="match status" value="1"/>
</dbReference>
<dbReference type="PIRSF" id="PIRSF000545">
    <property type="entry name" value="Pantothenate_kin"/>
    <property type="match status" value="1"/>
</dbReference>
<dbReference type="SUPFAM" id="SSF52540">
    <property type="entry name" value="P-loop containing nucleoside triphosphate hydrolases"/>
    <property type="match status" value="1"/>
</dbReference>
<accession>B6J596</accession>